<evidence type="ECO:0000255" key="1">
    <source>
        <dbReference type="HAMAP-Rule" id="MF_01302"/>
    </source>
</evidence>
<evidence type="ECO:0000305" key="2"/>
<sequence>MTVTDPIADMLVRIKNANMRRHPTVDVPYSKMKEKIIEILLREGYIAKYEVIGEIPQKYIRVYLKYKGKTPVIQDVKRVSKPGRRYYVNKEEIPRVLGGLGIAILSTSKGIMTDKEARLLGIGGELICMVW</sequence>
<accession>B8E1E7</accession>
<dbReference type="EMBL" id="CP001251">
    <property type="protein sequence ID" value="ACK42275.1"/>
    <property type="molecule type" value="Genomic_DNA"/>
</dbReference>
<dbReference type="RefSeq" id="WP_012583359.1">
    <property type="nucleotide sequence ID" value="NC_011661.1"/>
</dbReference>
<dbReference type="RefSeq" id="YP_002352889.1">
    <property type="nucleotide sequence ID" value="NC_011661.1"/>
</dbReference>
<dbReference type="SMR" id="B8E1E7"/>
<dbReference type="FunCoup" id="B8E1E7">
    <property type="interactions" value="338"/>
</dbReference>
<dbReference type="STRING" id="515635.Dtur_0995"/>
<dbReference type="EnsemblBacteria" id="ACK42275">
    <property type="protein sequence ID" value="ACK42275"/>
    <property type="gene ID" value="Dtur_0995"/>
</dbReference>
<dbReference type="KEGG" id="dtu:Dtur_0995"/>
<dbReference type="PATRIC" id="fig|515635.4.peg.1032"/>
<dbReference type="eggNOG" id="COG0096">
    <property type="taxonomic scope" value="Bacteria"/>
</dbReference>
<dbReference type="HOGENOM" id="CLU_098428_0_0_0"/>
<dbReference type="InParanoid" id="B8E1E7"/>
<dbReference type="OrthoDB" id="9802617at2"/>
<dbReference type="Proteomes" id="UP000007719">
    <property type="component" value="Chromosome"/>
</dbReference>
<dbReference type="GO" id="GO:0022627">
    <property type="term" value="C:cytosolic small ribosomal subunit"/>
    <property type="evidence" value="ECO:0000318"/>
    <property type="project" value="GO_Central"/>
</dbReference>
<dbReference type="GO" id="GO:0019843">
    <property type="term" value="F:rRNA binding"/>
    <property type="evidence" value="ECO:0007669"/>
    <property type="project" value="UniProtKB-UniRule"/>
</dbReference>
<dbReference type="GO" id="GO:0003735">
    <property type="term" value="F:structural constituent of ribosome"/>
    <property type="evidence" value="ECO:0000318"/>
    <property type="project" value="GO_Central"/>
</dbReference>
<dbReference type="GO" id="GO:0006412">
    <property type="term" value="P:translation"/>
    <property type="evidence" value="ECO:0007669"/>
    <property type="project" value="UniProtKB-UniRule"/>
</dbReference>
<dbReference type="FunFam" id="3.30.1370.30:FF:000002">
    <property type="entry name" value="30S ribosomal protein S8"/>
    <property type="match status" value="1"/>
</dbReference>
<dbReference type="FunFam" id="3.30.1490.10:FF:000001">
    <property type="entry name" value="30S ribosomal protein S8"/>
    <property type="match status" value="1"/>
</dbReference>
<dbReference type="Gene3D" id="3.30.1370.30">
    <property type="match status" value="1"/>
</dbReference>
<dbReference type="Gene3D" id="3.30.1490.10">
    <property type="match status" value="1"/>
</dbReference>
<dbReference type="HAMAP" id="MF_01302_B">
    <property type="entry name" value="Ribosomal_uS8_B"/>
    <property type="match status" value="1"/>
</dbReference>
<dbReference type="InterPro" id="IPR000630">
    <property type="entry name" value="Ribosomal_uS8"/>
</dbReference>
<dbReference type="InterPro" id="IPR047863">
    <property type="entry name" value="Ribosomal_uS8_CS"/>
</dbReference>
<dbReference type="InterPro" id="IPR035987">
    <property type="entry name" value="Ribosomal_uS8_sf"/>
</dbReference>
<dbReference type="NCBIfam" id="NF001109">
    <property type="entry name" value="PRK00136.1"/>
    <property type="match status" value="1"/>
</dbReference>
<dbReference type="PANTHER" id="PTHR11758">
    <property type="entry name" value="40S RIBOSOMAL PROTEIN S15A"/>
    <property type="match status" value="1"/>
</dbReference>
<dbReference type="Pfam" id="PF00410">
    <property type="entry name" value="Ribosomal_S8"/>
    <property type="match status" value="1"/>
</dbReference>
<dbReference type="SUPFAM" id="SSF56047">
    <property type="entry name" value="Ribosomal protein S8"/>
    <property type="match status" value="1"/>
</dbReference>
<dbReference type="PROSITE" id="PS00053">
    <property type="entry name" value="RIBOSOMAL_S8"/>
    <property type="match status" value="1"/>
</dbReference>
<organism>
    <name type="scientific">Dictyoglomus turgidum (strain DSM 6724 / Z-1310)</name>
    <dbReference type="NCBI Taxonomy" id="515635"/>
    <lineage>
        <taxon>Bacteria</taxon>
        <taxon>Pseudomonadati</taxon>
        <taxon>Dictyoglomota</taxon>
        <taxon>Dictyoglomia</taxon>
        <taxon>Dictyoglomales</taxon>
        <taxon>Dictyoglomaceae</taxon>
        <taxon>Dictyoglomus</taxon>
    </lineage>
</organism>
<gene>
    <name evidence="1" type="primary">rpsH</name>
    <name type="ordered locus">Dtur_0995</name>
</gene>
<comment type="function">
    <text evidence="1">One of the primary rRNA binding proteins, it binds directly to 16S rRNA central domain where it helps coordinate assembly of the platform of the 30S subunit.</text>
</comment>
<comment type="subunit">
    <text evidence="1">Part of the 30S ribosomal subunit. Contacts proteins S5 and S12.</text>
</comment>
<comment type="similarity">
    <text evidence="1">Belongs to the universal ribosomal protein uS8 family.</text>
</comment>
<protein>
    <recommendedName>
        <fullName evidence="1">Small ribosomal subunit protein uS8</fullName>
    </recommendedName>
    <alternativeName>
        <fullName evidence="2">30S ribosomal protein S8</fullName>
    </alternativeName>
</protein>
<feature type="chain" id="PRO_1000140546" description="Small ribosomal subunit protein uS8">
    <location>
        <begin position="1"/>
        <end position="131"/>
    </location>
</feature>
<reference key="1">
    <citation type="journal article" date="2016" name="Front. Microbiol.">
        <title>The complete genome sequence of hyperthermophile Dictyoglomus turgidum DSM 6724 reveals a specialized carbohydrate fermentor.</title>
        <authorList>
            <person name="Brumm P.J."/>
            <person name="Gowda K."/>
            <person name="Robb F.T."/>
            <person name="Mead D.A."/>
        </authorList>
    </citation>
    <scope>NUCLEOTIDE SEQUENCE [LARGE SCALE GENOMIC DNA]</scope>
    <source>
        <strain>DSM 6724 / Z-1310</strain>
    </source>
</reference>
<proteinExistence type="inferred from homology"/>
<name>RS8_DICTD</name>
<keyword id="KW-1185">Reference proteome</keyword>
<keyword id="KW-0687">Ribonucleoprotein</keyword>
<keyword id="KW-0689">Ribosomal protein</keyword>
<keyword id="KW-0694">RNA-binding</keyword>
<keyword id="KW-0699">rRNA-binding</keyword>